<protein>
    <recommendedName>
        <fullName evidence="1">Urease subunit alpha</fullName>
        <ecNumber evidence="1">3.5.1.5</ecNumber>
    </recommendedName>
    <alternativeName>
        <fullName evidence="1">Urea amidohydrolase subunit alpha</fullName>
    </alternativeName>
</protein>
<organism>
    <name type="scientific">Polynucleobacter asymbioticus (strain DSM 18221 / CIP 109841 / QLW-P1DMWA-1)</name>
    <name type="common">Polynucleobacter necessarius subsp. asymbioticus</name>
    <dbReference type="NCBI Taxonomy" id="312153"/>
    <lineage>
        <taxon>Bacteria</taxon>
        <taxon>Pseudomonadati</taxon>
        <taxon>Pseudomonadota</taxon>
        <taxon>Betaproteobacteria</taxon>
        <taxon>Burkholderiales</taxon>
        <taxon>Burkholderiaceae</taxon>
        <taxon>Polynucleobacter</taxon>
    </lineage>
</organism>
<dbReference type="EC" id="3.5.1.5" evidence="1"/>
<dbReference type="EMBL" id="CP000655">
    <property type="protein sequence ID" value="ABP34408.1"/>
    <property type="molecule type" value="Genomic_DNA"/>
</dbReference>
<dbReference type="RefSeq" id="WP_011903033.1">
    <property type="nucleotide sequence ID" value="NC_009379.1"/>
</dbReference>
<dbReference type="SMR" id="A4SY44"/>
<dbReference type="MEROPS" id="M38.982"/>
<dbReference type="GeneID" id="31481579"/>
<dbReference type="KEGG" id="pnu:Pnuc_1193"/>
<dbReference type="eggNOG" id="COG0804">
    <property type="taxonomic scope" value="Bacteria"/>
</dbReference>
<dbReference type="HOGENOM" id="CLU_000980_0_0_4"/>
<dbReference type="UniPathway" id="UPA00258">
    <property type="reaction ID" value="UER00370"/>
</dbReference>
<dbReference type="Proteomes" id="UP000000231">
    <property type="component" value="Chromosome"/>
</dbReference>
<dbReference type="GO" id="GO:0005737">
    <property type="term" value="C:cytoplasm"/>
    <property type="evidence" value="ECO:0007669"/>
    <property type="project" value="UniProtKB-SubCell"/>
</dbReference>
<dbReference type="GO" id="GO:0016151">
    <property type="term" value="F:nickel cation binding"/>
    <property type="evidence" value="ECO:0007669"/>
    <property type="project" value="UniProtKB-UniRule"/>
</dbReference>
<dbReference type="GO" id="GO:0009039">
    <property type="term" value="F:urease activity"/>
    <property type="evidence" value="ECO:0007669"/>
    <property type="project" value="UniProtKB-UniRule"/>
</dbReference>
<dbReference type="GO" id="GO:0043419">
    <property type="term" value="P:urea catabolic process"/>
    <property type="evidence" value="ECO:0007669"/>
    <property type="project" value="UniProtKB-UniRule"/>
</dbReference>
<dbReference type="CDD" id="cd00375">
    <property type="entry name" value="Urease_alpha"/>
    <property type="match status" value="1"/>
</dbReference>
<dbReference type="Gene3D" id="3.20.20.140">
    <property type="entry name" value="Metal-dependent hydrolases"/>
    <property type="match status" value="1"/>
</dbReference>
<dbReference type="Gene3D" id="2.30.40.10">
    <property type="entry name" value="Urease, subunit C, domain 1"/>
    <property type="match status" value="1"/>
</dbReference>
<dbReference type="HAMAP" id="MF_01953">
    <property type="entry name" value="Urease_alpha"/>
    <property type="match status" value="1"/>
</dbReference>
<dbReference type="InterPro" id="IPR006680">
    <property type="entry name" value="Amidohydro-rel"/>
</dbReference>
<dbReference type="InterPro" id="IPR011059">
    <property type="entry name" value="Metal-dep_hydrolase_composite"/>
</dbReference>
<dbReference type="InterPro" id="IPR032466">
    <property type="entry name" value="Metal_Hydrolase"/>
</dbReference>
<dbReference type="InterPro" id="IPR011612">
    <property type="entry name" value="Urease_alpha_N_dom"/>
</dbReference>
<dbReference type="InterPro" id="IPR050112">
    <property type="entry name" value="Urease_alpha_subunit"/>
</dbReference>
<dbReference type="InterPro" id="IPR017950">
    <property type="entry name" value="Urease_AS"/>
</dbReference>
<dbReference type="InterPro" id="IPR005848">
    <property type="entry name" value="Urease_asu"/>
</dbReference>
<dbReference type="InterPro" id="IPR017951">
    <property type="entry name" value="Urease_asu_c"/>
</dbReference>
<dbReference type="InterPro" id="IPR029754">
    <property type="entry name" value="Urease_Ni-bd"/>
</dbReference>
<dbReference type="NCBIfam" id="NF009685">
    <property type="entry name" value="PRK13206.1"/>
    <property type="match status" value="1"/>
</dbReference>
<dbReference type="NCBIfam" id="NF009686">
    <property type="entry name" value="PRK13207.1"/>
    <property type="match status" value="1"/>
</dbReference>
<dbReference type="NCBIfam" id="TIGR01792">
    <property type="entry name" value="urease_alph"/>
    <property type="match status" value="1"/>
</dbReference>
<dbReference type="PANTHER" id="PTHR43440">
    <property type="entry name" value="UREASE"/>
    <property type="match status" value="1"/>
</dbReference>
<dbReference type="PANTHER" id="PTHR43440:SF1">
    <property type="entry name" value="UREASE"/>
    <property type="match status" value="1"/>
</dbReference>
<dbReference type="Pfam" id="PF01979">
    <property type="entry name" value="Amidohydro_1"/>
    <property type="match status" value="1"/>
</dbReference>
<dbReference type="Pfam" id="PF00449">
    <property type="entry name" value="Urease_alpha"/>
    <property type="match status" value="1"/>
</dbReference>
<dbReference type="PRINTS" id="PR01752">
    <property type="entry name" value="UREASE"/>
</dbReference>
<dbReference type="SUPFAM" id="SSF51338">
    <property type="entry name" value="Composite domain of metallo-dependent hydrolases"/>
    <property type="match status" value="2"/>
</dbReference>
<dbReference type="SUPFAM" id="SSF51556">
    <property type="entry name" value="Metallo-dependent hydrolases"/>
    <property type="match status" value="1"/>
</dbReference>
<dbReference type="PROSITE" id="PS01120">
    <property type="entry name" value="UREASE_1"/>
    <property type="match status" value="1"/>
</dbReference>
<dbReference type="PROSITE" id="PS00145">
    <property type="entry name" value="UREASE_2"/>
    <property type="match status" value="1"/>
</dbReference>
<dbReference type="PROSITE" id="PS51368">
    <property type="entry name" value="UREASE_3"/>
    <property type="match status" value="1"/>
</dbReference>
<accession>A4SY44</accession>
<proteinExistence type="inferred from homology"/>
<gene>
    <name evidence="1" type="primary">ureC</name>
    <name type="ordered locus">Pnuc_1193</name>
</gene>
<reference key="1">
    <citation type="journal article" date="2012" name="Stand. Genomic Sci.">
        <title>Complete genome sequence of Polynucleobacter necessarius subsp. asymbioticus type strain (QLW-P1DMWA-1(T)).</title>
        <authorList>
            <person name="Meincke L."/>
            <person name="Copeland A."/>
            <person name="Lapidus A."/>
            <person name="Lucas S."/>
            <person name="Berry K.W."/>
            <person name="Del Rio T.G."/>
            <person name="Hammon N."/>
            <person name="Dalin E."/>
            <person name="Tice H."/>
            <person name="Pitluck S."/>
            <person name="Richardson P."/>
            <person name="Bruce D."/>
            <person name="Goodwin L."/>
            <person name="Han C."/>
            <person name="Tapia R."/>
            <person name="Detter J.C."/>
            <person name="Schmutz J."/>
            <person name="Brettin T."/>
            <person name="Larimer F."/>
            <person name="Land M."/>
            <person name="Hauser L."/>
            <person name="Kyrpides N.C."/>
            <person name="Ivanova N."/>
            <person name="Goker M."/>
            <person name="Woyke T."/>
            <person name="Wu Q.L."/>
            <person name="Pockl M."/>
            <person name="Hahn M.W."/>
            <person name="Klenk H.P."/>
        </authorList>
    </citation>
    <scope>NUCLEOTIDE SEQUENCE [LARGE SCALE GENOMIC DNA]</scope>
    <source>
        <strain>DSM 18221 / CIP 109841 / QLW-P1DMWA-1</strain>
    </source>
</reference>
<evidence type="ECO:0000255" key="1">
    <source>
        <dbReference type="HAMAP-Rule" id="MF_01953"/>
    </source>
</evidence>
<comment type="catalytic activity">
    <reaction evidence="1">
        <text>urea + 2 H2O + H(+) = hydrogencarbonate + 2 NH4(+)</text>
        <dbReference type="Rhea" id="RHEA:20557"/>
        <dbReference type="ChEBI" id="CHEBI:15377"/>
        <dbReference type="ChEBI" id="CHEBI:15378"/>
        <dbReference type="ChEBI" id="CHEBI:16199"/>
        <dbReference type="ChEBI" id="CHEBI:17544"/>
        <dbReference type="ChEBI" id="CHEBI:28938"/>
        <dbReference type="EC" id="3.5.1.5"/>
    </reaction>
</comment>
<comment type="cofactor">
    <cofactor evidence="1">
        <name>Ni cation</name>
        <dbReference type="ChEBI" id="CHEBI:25516"/>
    </cofactor>
    <text evidence="1">Binds 2 nickel ions per subunit.</text>
</comment>
<comment type="pathway">
    <text evidence="1">Nitrogen metabolism; urea degradation; CO(2) and NH(3) from urea (urease route): step 1/1.</text>
</comment>
<comment type="subunit">
    <text evidence="1">Heterotrimer of UreA (gamma), UreB (beta) and UreC (alpha) subunits. Three heterotrimers associate to form the active enzyme.</text>
</comment>
<comment type="subcellular location">
    <subcellularLocation>
        <location evidence="1">Cytoplasm</location>
    </subcellularLocation>
</comment>
<comment type="PTM">
    <text evidence="1">Carboxylation allows a single lysine to coordinate two nickel ions.</text>
</comment>
<comment type="similarity">
    <text evidence="1">Belongs to the metallo-dependent hydrolases superfamily. Urease alpha subunit family.</text>
</comment>
<keyword id="KW-0963">Cytoplasm</keyword>
<keyword id="KW-0378">Hydrolase</keyword>
<keyword id="KW-0479">Metal-binding</keyword>
<keyword id="KW-0533">Nickel</keyword>
<keyword id="KW-1185">Reference proteome</keyword>
<sequence length="567" mass="60944">MAKVSRQAYAEMFGPTTGDRLRLADTGLMIEVEKDFTVYGEEVKFGGGKVIRDGMGQSQRESKDCADTVITNAVIIDHWGIVKADISIKNGRISNIGKAGNPDIQPGITSVIGPGTEIIAGEGMIVTAGGIDTHIHFICPQQIEEALMSGVTTMIGGGTGPATGTFATTCTPGPWHIQRMLQSIDAYPMNIGLLGKGNASLPGGLREQVDAGAIGLKLHEDWGTTPAAIDCCLGVADDTDTQVAIHTDTLNESGFVETTLAAFKGRTIHTYHTEGAGGGHAPDIIRACGESNVLPSSTNPTRPFTVNTLDEHLDMLMVCHHLDASIAEDIAFAESRIRRETIAAEDILHDLGAFSMLSSDSQAMGRVGEVIIRTWQTADKMKAQRGLLPGDTNRNDNFRVKRYISKYTINPAITHGISHVVGSIEVGKYADLVFWKPAFFGVKPSLILKGGSIAAAAMGDPNASIPTPQPVHYRNMFAGIGQGIRHSSLTFISQSAMNANIRDAYGLEKQVEVVKNCRSITKADMIHNDWQPNITVDPETYQVIANGELLTCEPAKVLPMAQRYFLF</sequence>
<feature type="chain" id="PRO_1000088494" description="Urease subunit alpha">
    <location>
        <begin position="1"/>
        <end position="567"/>
    </location>
</feature>
<feature type="active site" description="Proton donor" evidence="1">
    <location>
        <position position="320"/>
    </location>
</feature>
<feature type="binding site" evidence="1">
    <location>
        <position position="134"/>
    </location>
    <ligand>
        <name>Ni(2+)</name>
        <dbReference type="ChEBI" id="CHEBI:49786"/>
        <label>1</label>
    </ligand>
</feature>
<feature type="binding site" evidence="1">
    <location>
        <position position="136"/>
    </location>
    <ligand>
        <name>Ni(2+)</name>
        <dbReference type="ChEBI" id="CHEBI:49786"/>
        <label>1</label>
    </ligand>
</feature>
<feature type="binding site" description="via carbamate group" evidence="1">
    <location>
        <position position="217"/>
    </location>
    <ligand>
        <name>Ni(2+)</name>
        <dbReference type="ChEBI" id="CHEBI:49786"/>
        <label>1</label>
    </ligand>
</feature>
<feature type="binding site" description="via carbamate group" evidence="1">
    <location>
        <position position="217"/>
    </location>
    <ligand>
        <name>Ni(2+)</name>
        <dbReference type="ChEBI" id="CHEBI:49786"/>
        <label>2</label>
    </ligand>
</feature>
<feature type="binding site" evidence="1">
    <location>
        <position position="219"/>
    </location>
    <ligand>
        <name>substrate</name>
    </ligand>
</feature>
<feature type="binding site" evidence="1">
    <location>
        <position position="246"/>
    </location>
    <ligand>
        <name>Ni(2+)</name>
        <dbReference type="ChEBI" id="CHEBI:49786"/>
        <label>2</label>
    </ligand>
</feature>
<feature type="binding site" evidence="1">
    <location>
        <position position="272"/>
    </location>
    <ligand>
        <name>Ni(2+)</name>
        <dbReference type="ChEBI" id="CHEBI:49786"/>
        <label>2</label>
    </ligand>
</feature>
<feature type="binding site" evidence="1">
    <location>
        <position position="360"/>
    </location>
    <ligand>
        <name>Ni(2+)</name>
        <dbReference type="ChEBI" id="CHEBI:49786"/>
        <label>1</label>
    </ligand>
</feature>
<feature type="modified residue" description="N6-carboxylysine" evidence="1">
    <location>
        <position position="217"/>
    </location>
</feature>
<name>URE1_POLAQ</name>